<reference key="1">
    <citation type="journal article" date="2004" name="Proc. Natl. Acad. Sci. U.S.A.">
        <title>The diploid genome sequence of Candida albicans.</title>
        <authorList>
            <person name="Jones T."/>
            <person name="Federspiel N.A."/>
            <person name="Chibana H."/>
            <person name="Dungan J."/>
            <person name="Kalman S."/>
            <person name="Magee B.B."/>
            <person name="Newport G."/>
            <person name="Thorstenson Y.R."/>
            <person name="Agabian N."/>
            <person name="Magee P.T."/>
            <person name="Davis R.W."/>
            <person name="Scherer S."/>
        </authorList>
    </citation>
    <scope>NUCLEOTIDE SEQUENCE [LARGE SCALE GENOMIC DNA]</scope>
    <source>
        <strain>SC5314 / ATCC MYA-2876</strain>
    </source>
</reference>
<reference key="2">
    <citation type="journal article" date="2007" name="Genome Biol.">
        <title>Assembly of the Candida albicans genome into sixteen supercontigs aligned on the eight chromosomes.</title>
        <authorList>
            <person name="van het Hoog M."/>
            <person name="Rast T.J."/>
            <person name="Martchenko M."/>
            <person name="Grindle S."/>
            <person name="Dignard D."/>
            <person name="Hogues H."/>
            <person name="Cuomo C."/>
            <person name="Berriman M."/>
            <person name="Scherer S."/>
            <person name="Magee B.B."/>
            <person name="Whiteway M."/>
            <person name="Chibana H."/>
            <person name="Nantel A."/>
            <person name="Magee P.T."/>
        </authorList>
    </citation>
    <scope>GENOME REANNOTATION</scope>
    <source>
        <strain>SC5314 / ATCC MYA-2876</strain>
    </source>
</reference>
<reference key="3">
    <citation type="journal article" date="2013" name="Genome Biol.">
        <title>Assembly of a phased diploid Candida albicans genome facilitates allele-specific measurements and provides a simple model for repeat and indel structure.</title>
        <authorList>
            <person name="Muzzey D."/>
            <person name="Schwartz K."/>
            <person name="Weissman J.S."/>
            <person name="Sherlock G."/>
        </authorList>
    </citation>
    <scope>NUCLEOTIDE SEQUENCE [LARGE SCALE GENOMIC DNA]</scope>
    <scope>GENOME REANNOTATION</scope>
    <source>
        <strain>SC5314 / ATCC MYA-2876</strain>
    </source>
</reference>
<sequence length="247" mass="27993">MSIVSLTGIEVLNNPAKFTDPYEFQITFECLEPLKEDLEWKLTYVGSSDSLDHDQELDSILVGPVPVGINSFLFKADAPSPELIPASELVSVTVIILSCSYNDKEFVRVGYYVNNEYDTEELRENPPAKVAIDHVVRNILAEKPRVTRFNIVWDNEEGADEYPPEQPEDEEEEEEEEEEGEEEEEDEDEEDDDDDEDLNGDAVVDLEKEEISTPRDNDEDIEIDIASESEVEEGGVEEEAKVNTPKD</sequence>
<organism>
    <name type="scientific">Candida albicans (strain SC5314 / ATCC MYA-2876)</name>
    <name type="common">Yeast</name>
    <dbReference type="NCBI Taxonomy" id="237561"/>
    <lineage>
        <taxon>Eukaryota</taxon>
        <taxon>Fungi</taxon>
        <taxon>Dikarya</taxon>
        <taxon>Ascomycota</taxon>
        <taxon>Saccharomycotina</taxon>
        <taxon>Pichiomycetes</taxon>
        <taxon>Debaryomycetaceae</taxon>
        <taxon>Candida/Lodderomyces clade</taxon>
        <taxon>Candida</taxon>
    </lineage>
</organism>
<protein>
    <recommendedName>
        <fullName>Histone chaperone ASF1</fullName>
    </recommendedName>
    <alternativeName>
        <fullName>Anti-silencing function protein 1</fullName>
    </alternativeName>
</protein>
<proteinExistence type="inferred from homology"/>
<gene>
    <name type="primary">ASF1</name>
    <name type="ordered locus">CAALFM_CR07860CA</name>
    <name type="ORF">CaO19.11200</name>
    <name type="ORF">CaO19.3715</name>
</gene>
<dbReference type="EMBL" id="CP017630">
    <property type="protein sequence ID" value="AOW31477.1"/>
    <property type="molecule type" value="Genomic_DNA"/>
</dbReference>
<dbReference type="RefSeq" id="XP_711054.1">
    <property type="nucleotide sequence ID" value="XM_705962.1"/>
</dbReference>
<dbReference type="SMR" id="Q59MV1"/>
<dbReference type="FunCoup" id="Q59MV1">
    <property type="interactions" value="891"/>
</dbReference>
<dbReference type="STRING" id="237561.Q59MV1"/>
<dbReference type="EnsemblFungi" id="CR_07860C_A-T">
    <property type="protein sequence ID" value="CR_07860C_A-T-p1"/>
    <property type="gene ID" value="CR_07860C_A"/>
</dbReference>
<dbReference type="GeneID" id="3647348"/>
<dbReference type="KEGG" id="cal:CAALFM_CR07860CA"/>
<dbReference type="CGD" id="CAL0000179732">
    <property type="gene designation" value="ASF1"/>
</dbReference>
<dbReference type="VEuPathDB" id="FungiDB:CR_07860C_A"/>
<dbReference type="eggNOG" id="KOG3265">
    <property type="taxonomic scope" value="Eukaryota"/>
</dbReference>
<dbReference type="HOGENOM" id="CLU_060354_0_1_1"/>
<dbReference type="InParanoid" id="Q59MV1"/>
<dbReference type="OMA" id="DYADQEM"/>
<dbReference type="OrthoDB" id="29755at2759"/>
<dbReference type="PRO" id="PR:Q59MV1"/>
<dbReference type="Proteomes" id="UP000000559">
    <property type="component" value="Chromosome R"/>
</dbReference>
<dbReference type="GO" id="GO:0000785">
    <property type="term" value="C:chromatin"/>
    <property type="evidence" value="ECO:0000318"/>
    <property type="project" value="GO_Central"/>
</dbReference>
<dbReference type="GO" id="GO:0000781">
    <property type="term" value="C:chromosome, telomeric region"/>
    <property type="evidence" value="ECO:0007669"/>
    <property type="project" value="GOC"/>
</dbReference>
<dbReference type="GO" id="GO:0005829">
    <property type="term" value="C:cytosol"/>
    <property type="evidence" value="ECO:0007669"/>
    <property type="project" value="EnsemblFungi"/>
</dbReference>
<dbReference type="GO" id="GO:0070775">
    <property type="term" value="C:H3 histone acetyltransferase complex"/>
    <property type="evidence" value="ECO:0007669"/>
    <property type="project" value="EnsemblFungi"/>
</dbReference>
<dbReference type="GO" id="GO:0005634">
    <property type="term" value="C:nucleus"/>
    <property type="evidence" value="ECO:0000318"/>
    <property type="project" value="GO_Central"/>
</dbReference>
<dbReference type="GO" id="GO:0010698">
    <property type="term" value="F:acetyltransferase activator activity"/>
    <property type="evidence" value="ECO:0007669"/>
    <property type="project" value="EnsemblFungi"/>
</dbReference>
<dbReference type="GO" id="GO:0042393">
    <property type="term" value="F:histone binding"/>
    <property type="evidence" value="ECO:0000318"/>
    <property type="project" value="GO_Central"/>
</dbReference>
<dbReference type="GO" id="GO:0033554">
    <property type="term" value="P:cellular response to stress"/>
    <property type="evidence" value="ECO:0007669"/>
    <property type="project" value="EnsemblFungi"/>
</dbReference>
<dbReference type="GO" id="GO:0006335">
    <property type="term" value="P:DNA replication-dependent chromatin assembly"/>
    <property type="evidence" value="ECO:0000318"/>
    <property type="project" value="GO_Central"/>
</dbReference>
<dbReference type="GO" id="GO:0006334">
    <property type="term" value="P:nucleosome assembly"/>
    <property type="evidence" value="ECO:0007669"/>
    <property type="project" value="InterPro"/>
</dbReference>
<dbReference type="GO" id="GO:0006337">
    <property type="term" value="P:nucleosome disassembly"/>
    <property type="evidence" value="ECO:0007669"/>
    <property type="project" value="EnsemblFungi"/>
</dbReference>
<dbReference type="GO" id="GO:0032968">
    <property type="term" value="P:positive regulation of transcription elongation by RNA polymerase II"/>
    <property type="evidence" value="ECO:0007669"/>
    <property type="project" value="EnsemblFungi"/>
</dbReference>
<dbReference type="GO" id="GO:0036211">
    <property type="term" value="P:protein modification process"/>
    <property type="evidence" value="ECO:0007669"/>
    <property type="project" value="EnsemblFungi"/>
</dbReference>
<dbReference type="GO" id="GO:0030466">
    <property type="term" value="P:silent mating-type cassette heterochromatin formation"/>
    <property type="evidence" value="ECO:0007669"/>
    <property type="project" value="EnsemblFungi"/>
</dbReference>
<dbReference type="GO" id="GO:0031509">
    <property type="term" value="P:subtelomeric heterochromatin formation"/>
    <property type="evidence" value="ECO:0007669"/>
    <property type="project" value="EnsemblFungi"/>
</dbReference>
<dbReference type="FunFam" id="2.60.40.1490:FF:000001">
    <property type="entry name" value="Histone chaperone ASF1"/>
    <property type="match status" value="1"/>
</dbReference>
<dbReference type="Gene3D" id="2.60.40.1490">
    <property type="entry name" value="Histone chaperone ASF1-like"/>
    <property type="match status" value="1"/>
</dbReference>
<dbReference type="InterPro" id="IPR006818">
    <property type="entry name" value="ASF1-like"/>
</dbReference>
<dbReference type="InterPro" id="IPR036747">
    <property type="entry name" value="ASF1-like_sf"/>
</dbReference>
<dbReference type="InterPro" id="IPR017282">
    <property type="entry name" value="Hist_deposition_Asf1"/>
</dbReference>
<dbReference type="PANTHER" id="PTHR12040">
    <property type="entry name" value="ANTI-SILENCING PROTEIN 1"/>
    <property type="match status" value="1"/>
</dbReference>
<dbReference type="PANTHER" id="PTHR12040:SF0">
    <property type="entry name" value="HISTONE CHAPERONE ASF1"/>
    <property type="match status" value="1"/>
</dbReference>
<dbReference type="Pfam" id="PF04729">
    <property type="entry name" value="ASF1_hist_chap"/>
    <property type="match status" value="1"/>
</dbReference>
<dbReference type="PIRSF" id="PIRSF037759">
    <property type="entry name" value="Histone_Asf1"/>
    <property type="match status" value="1"/>
</dbReference>
<dbReference type="SUPFAM" id="SSF101546">
    <property type="entry name" value="ASF1-like"/>
    <property type="match status" value="1"/>
</dbReference>
<keyword id="KW-0143">Chaperone</keyword>
<keyword id="KW-0156">Chromatin regulator</keyword>
<keyword id="KW-0175">Coiled coil</keyword>
<keyword id="KW-0539">Nucleus</keyword>
<keyword id="KW-1185">Reference proteome</keyword>
<keyword id="KW-0804">Transcription</keyword>
<keyword id="KW-0805">Transcription regulation</keyword>
<feature type="chain" id="PRO_0000284029" description="Histone chaperone ASF1">
    <location>
        <begin position="1"/>
        <end position="247"/>
    </location>
</feature>
<feature type="region of interest" description="Disordered" evidence="3">
    <location>
        <begin position="151"/>
        <end position="247"/>
    </location>
</feature>
<feature type="coiled-coil region" evidence="2">
    <location>
        <begin position="165"/>
        <end position="193"/>
    </location>
</feature>
<feature type="compositionally biased region" description="Acidic residues" evidence="3">
    <location>
        <begin position="154"/>
        <end position="199"/>
    </location>
</feature>
<feature type="compositionally biased region" description="Basic and acidic residues" evidence="3">
    <location>
        <begin position="205"/>
        <end position="216"/>
    </location>
</feature>
<feature type="compositionally biased region" description="Acidic residues" evidence="3">
    <location>
        <begin position="217"/>
        <end position="237"/>
    </location>
</feature>
<feature type="compositionally biased region" description="Basic and acidic residues" evidence="3">
    <location>
        <begin position="238"/>
        <end position="247"/>
    </location>
</feature>
<accession>Q59MV1</accession>
<accession>A0A1D8PTM2</accession>
<evidence type="ECO:0000250" key="1"/>
<evidence type="ECO:0000255" key="2"/>
<evidence type="ECO:0000256" key="3">
    <source>
        <dbReference type="SAM" id="MobiDB-lite"/>
    </source>
</evidence>
<evidence type="ECO:0000305" key="4"/>
<name>ASF1_CANAL</name>
<comment type="function">
    <text evidence="1">Histone chaperone that facilitates histone deposition and histone exchange and removal during nucleosome assembly and disassembly.</text>
</comment>
<comment type="subunit">
    <text evidence="1">Interacts with histone H3 and histone H4.</text>
</comment>
<comment type="subcellular location">
    <subcellularLocation>
        <location evidence="1">Nucleus</location>
    </subcellularLocation>
</comment>
<comment type="similarity">
    <text evidence="4">Belongs to the ASF1 family.</text>
</comment>